<organism>
    <name type="scientific">Lactiplantibacillus plantarum (strain ATCC BAA-793 / NCIMB 8826 / WCFS1)</name>
    <name type="common">Lactobacillus plantarum</name>
    <dbReference type="NCBI Taxonomy" id="220668"/>
    <lineage>
        <taxon>Bacteria</taxon>
        <taxon>Bacillati</taxon>
        <taxon>Bacillota</taxon>
        <taxon>Bacilli</taxon>
        <taxon>Lactobacillales</taxon>
        <taxon>Lactobacillaceae</taxon>
        <taxon>Lactiplantibacillus</taxon>
    </lineage>
</organism>
<gene>
    <name type="ordered locus">lp_2274</name>
</gene>
<accession>Q88V13</accession>
<accession>F9UQJ3</accession>
<evidence type="ECO:0000255" key="1">
    <source>
        <dbReference type="HAMAP-Rule" id="MF_00651"/>
    </source>
</evidence>
<comment type="function">
    <text evidence="1">Could be a nuclease involved in processing of the 5'-end of pre-16S rRNA.</text>
</comment>
<comment type="subcellular location">
    <subcellularLocation>
        <location evidence="1">Cytoplasm</location>
    </subcellularLocation>
</comment>
<comment type="similarity">
    <text evidence="1">Belongs to the YqgF nuclease family.</text>
</comment>
<dbReference type="EC" id="3.1.-.-" evidence="1"/>
<dbReference type="EMBL" id="AL935263">
    <property type="protein sequence ID" value="CCC79482.1"/>
    <property type="molecule type" value="Genomic_DNA"/>
</dbReference>
<dbReference type="RefSeq" id="YP_004889996.1">
    <property type="nucleotide sequence ID" value="NC_004567.2"/>
</dbReference>
<dbReference type="SMR" id="Q88V13"/>
<dbReference type="STRING" id="220668.lp_2274"/>
<dbReference type="EnsemblBacteria" id="CCC79482">
    <property type="protein sequence ID" value="CCC79482"/>
    <property type="gene ID" value="lp_2274"/>
</dbReference>
<dbReference type="KEGG" id="lpl:lp_2274"/>
<dbReference type="PATRIC" id="fig|220668.9.peg.1925"/>
<dbReference type="eggNOG" id="COG0816">
    <property type="taxonomic scope" value="Bacteria"/>
</dbReference>
<dbReference type="HOGENOM" id="CLU_098240_2_0_9"/>
<dbReference type="OrthoDB" id="9796140at2"/>
<dbReference type="PhylomeDB" id="Q88V13"/>
<dbReference type="Proteomes" id="UP000000432">
    <property type="component" value="Chromosome"/>
</dbReference>
<dbReference type="GO" id="GO:0005829">
    <property type="term" value="C:cytosol"/>
    <property type="evidence" value="ECO:0007669"/>
    <property type="project" value="TreeGrafter"/>
</dbReference>
<dbReference type="GO" id="GO:0004518">
    <property type="term" value="F:nuclease activity"/>
    <property type="evidence" value="ECO:0007669"/>
    <property type="project" value="UniProtKB-KW"/>
</dbReference>
<dbReference type="GO" id="GO:0000967">
    <property type="term" value="P:rRNA 5'-end processing"/>
    <property type="evidence" value="ECO:0007669"/>
    <property type="project" value="UniProtKB-UniRule"/>
</dbReference>
<dbReference type="CDD" id="cd16964">
    <property type="entry name" value="YqgF"/>
    <property type="match status" value="1"/>
</dbReference>
<dbReference type="Gene3D" id="3.30.420.140">
    <property type="entry name" value="YqgF/RNase H-like domain"/>
    <property type="match status" value="1"/>
</dbReference>
<dbReference type="HAMAP" id="MF_00651">
    <property type="entry name" value="Nuclease_YqgF"/>
    <property type="match status" value="1"/>
</dbReference>
<dbReference type="InterPro" id="IPR012337">
    <property type="entry name" value="RNaseH-like_sf"/>
</dbReference>
<dbReference type="InterPro" id="IPR005227">
    <property type="entry name" value="YqgF"/>
</dbReference>
<dbReference type="InterPro" id="IPR006641">
    <property type="entry name" value="YqgF/RNaseH-like_dom"/>
</dbReference>
<dbReference type="InterPro" id="IPR037027">
    <property type="entry name" value="YqgF/RNaseH-like_dom_sf"/>
</dbReference>
<dbReference type="NCBIfam" id="TIGR00250">
    <property type="entry name" value="RNAse_H_YqgF"/>
    <property type="match status" value="1"/>
</dbReference>
<dbReference type="PANTHER" id="PTHR33317">
    <property type="entry name" value="POLYNUCLEOTIDYL TRANSFERASE, RIBONUCLEASE H-LIKE SUPERFAMILY PROTEIN"/>
    <property type="match status" value="1"/>
</dbReference>
<dbReference type="PANTHER" id="PTHR33317:SF4">
    <property type="entry name" value="POLYNUCLEOTIDYL TRANSFERASE, RIBONUCLEASE H-LIKE SUPERFAMILY PROTEIN"/>
    <property type="match status" value="1"/>
</dbReference>
<dbReference type="Pfam" id="PF03652">
    <property type="entry name" value="RuvX"/>
    <property type="match status" value="1"/>
</dbReference>
<dbReference type="SMART" id="SM00732">
    <property type="entry name" value="YqgFc"/>
    <property type="match status" value="1"/>
</dbReference>
<dbReference type="SUPFAM" id="SSF53098">
    <property type="entry name" value="Ribonuclease H-like"/>
    <property type="match status" value="1"/>
</dbReference>
<sequence>MKLMGLDVGSRTVGVAISDAFGWTAQGVEIIRINEDAEEFGIDRVAELVEELDAGGFVLGLPKNMNNTLGPRAEAAQHYGELLTARFHLPVDFEDERLTTVEAERMLVEEANTSRKKRKKVIDKLAASLILQNYLDRHGKLTQE</sequence>
<protein>
    <recommendedName>
        <fullName evidence="1">Putative pre-16S rRNA nuclease</fullName>
        <ecNumber evidence="1">3.1.-.-</ecNumber>
    </recommendedName>
</protein>
<keyword id="KW-0963">Cytoplasm</keyword>
<keyword id="KW-0378">Hydrolase</keyword>
<keyword id="KW-0540">Nuclease</keyword>
<keyword id="KW-1185">Reference proteome</keyword>
<keyword id="KW-0690">Ribosome biogenesis</keyword>
<reference key="1">
    <citation type="journal article" date="2003" name="Proc. Natl. Acad. Sci. U.S.A.">
        <title>Complete genome sequence of Lactobacillus plantarum WCFS1.</title>
        <authorList>
            <person name="Kleerebezem M."/>
            <person name="Boekhorst J."/>
            <person name="van Kranenburg R."/>
            <person name="Molenaar D."/>
            <person name="Kuipers O.P."/>
            <person name="Leer R."/>
            <person name="Tarchini R."/>
            <person name="Peters S.A."/>
            <person name="Sandbrink H.M."/>
            <person name="Fiers M.W.E.J."/>
            <person name="Stiekema W."/>
            <person name="Klein Lankhorst R.M."/>
            <person name="Bron P.A."/>
            <person name="Hoffer S.M."/>
            <person name="Nierop Groot M.N."/>
            <person name="Kerkhoven R."/>
            <person name="De Vries M."/>
            <person name="Ursing B."/>
            <person name="De Vos W.M."/>
            <person name="Siezen R.J."/>
        </authorList>
    </citation>
    <scope>NUCLEOTIDE SEQUENCE [LARGE SCALE GENOMIC DNA]</scope>
    <source>
        <strain>ATCC BAA-793 / NCIMB 8826 / WCFS1</strain>
    </source>
</reference>
<reference key="2">
    <citation type="journal article" date="2012" name="J. Bacteriol.">
        <title>Complete resequencing and reannotation of the Lactobacillus plantarum WCFS1 genome.</title>
        <authorList>
            <person name="Siezen R.J."/>
            <person name="Francke C."/>
            <person name="Renckens B."/>
            <person name="Boekhorst J."/>
            <person name="Wels M."/>
            <person name="Kleerebezem M."/>
            <person name="van Hijum S.A."/>
        </authorList>
    </citation>
    <scope>NUCLEOTIDE SEQUENCE [LARGE SCALE GENOMIC DNA]</scope>
    <scope>GENOME REANNOTATION</scope>
    <source>
        <strain>ATCC BAA-793 / NCIMB 8826 / WCFS1</strain>
    </source>
</reference>
<feature type="chain" id="PRO_0000172079" description="Putative pre-16S rRNA nuclease">
    <location>
        <begin position="1"/>
        <end position="144"/>
    </location>
</feature>
<proteinExistence type="inferred from homology"/>
<name>YQGF_LACPL</name>